<proteinExistence type="inferred from homology"/>
<accession>Q8KL44</accession>
<evidence type="ECO:0000255" key="1">
    <source>
        <dbReference type="HAMAP-Rule" id="MF_01039"/>
    </source>
</evidence>
<comment type="function">
    <text evidence="1">Catalyzes the interconversion of 2-phosphoglycerate and 3-phosphoglycerate.</text>
</comment>
<comment type="catalytic activity">
    <reaction evidence="1">
        <text>(2R)-2-phosphoglycerate = (2R)-3-phosphoglycerate</text>
        <dbReference type="Rhea" id="RHEA:15901"/>
        <dbReference type="ChEBI" id="CHEBI:58272"/>
        <dbReference type="ChEBI" id="CHEBI:58289"/>
        <dbReference type="EC" id="5.4.2.11"/>
    </reaction>
</comment>
<comment type="pathway">
    <text evidence="1">Carbohydrate degradation; glycolysis; pyruvate from D-glyceraldehyde 3-phosphate: step 3/5.</text>
</comment>
<comment type="subunit">
    <text evidence="1">Homodimer.</text>
</comment>
<comment type="similarity">
    <text evidence="1">Belongs to the phosphoglycerate mutase family. BPG-dependent PGAM subfamily.</text>
</comment>
<name>GPMA_RHIEC</name>
<protein>
    <recommendedName>
        <fullName evidence="1">2,3-bisphosphoglycerate-dependent phosphoglycerate mutase</fullName>
        <shortName evidence="1">BPG-dependent PGAM</shortName>
        <shortName evidence="1">PGAM</shortName>
        <shortName evidence="1">Phosphoglyceromutase</shortName>
        <shortName evidence="1">dPGM</shortName>
        <ecNumber evidence="1">5.4.2.11</ecNumber>
    </recommendedName>
</protein>
<sequence length="209" mass="22885">MSTLVIVRHGQSEGNARGEFTGTSDVPLTQEGWSESRRAGSLLANLGISFDIAFSSALLRTVDTCRAILNETNGDLLEPIRRTELNERDYGQLTGINKNVARERWGQDVVQVWRRSYSTPPPGGESIRDISARVLPFLISEVFPPLLRGKSVLVVAHGNTIRSLKQGIERLTIQDTLAIESPTAAPTVYRIASDLSIIEKTNVLVGTVC</sequence>
<organism>
    <name type="scientific">Rhizobium etli (strain ATCC 51251 / DSM 11541 / JCM 21823 / NBRC 15573 / CFN 42)</name>
    <dbReference type="NCBI Taxonomy" id="347834"/>
    <lineage>
        <taxon>Bacteria</taxon>
        <taxon>Pseudomonadati</taxon>
        <taxon>Pseudomonadota</taxon>
        <taxon>Alphaproteobacteria</taxon>
        <taxon>Hyphomicrobiales</taxon>
        <taxon>Rhizobiaceae</taxon>
        <taxon>Rhizobium/Agrobacterium group</taxon>
        <taxon>Rhizobium</taxon>
    </lineage>
</organism>
<dbReference type="EC" id="5.4.2.11" evidence="1"/>
<dbReference type="EMBL" id="U80928">
    <property type="protein sequence ID" value="AAM54923.1"/>
    <property type="molecule type" value="Genomic_DNA"/>
</dbReference>
<dbReference type="RefSeq" id="WP_008534389.1">
    <property type="nucleotide sequence ID" value="NC_004041.2"/>
</dbReference>
<dbReference type="SMR" id="Q8KL44"/>
<dbReference type="KEGG" id="ret:RHE_PD00127"/>
<dbReference type="HOGENOM" id="CLU_033323_1_4_5"/>
<dbReference type="OrthoDB" id="8347407at2"/>
<dbReference type="UniPathway" id="UPA00109">
    <property type="reaction ID" value="UER00186"/>
</dbReference>
<dbReference type="Proteomes" id="UP000001936">
    <property type="component" value="Plasmid p42d"/>
</dbReference>
<dbReference type="GO" id="GO:0004619">
    <property type="term" value="F:phosphoglycerate mutase activity"/>
    <property type="evidence" value="ECO:0007669"/>
    <property type="project" value="UniProtKB-EC"/>
</dbReference>
<dbReference type="GO" id="GO:0006094">
    <property type="term" value="P:gluconeogenesis"/>
    <property type="evidence" value="ECO:0007669"/>
    <property type="project" value="UniProtKB-UniRule"/>
</dbReference>
<dbReference type="GO" id="GO:0006096">
    <property type="term" value="P:glycolytic process"/>
    <property type="evidence" value="ECO:0007669"/>
    <property type="project" value="UniProtKB-UniRule"/>
</dbReference>
<dbReference type="CDD" id="cd07067">
    <property type="entry name" value="HP_PGM_like"/>
    <property type="match status" value="1"/>
</dbReference>
<dbReference type="Gene3D" id="3.40.50.1240">
    <property type="entry name" value="Phosphoglycerate mutase-like"/>
    <property type="match status" value="1"/>
</dbReference>
<dbReference type="HAMAP" id="MF_01039">
    <property type="entry name" value="PGAM_GpmA"/>
    <property type="match status" value="1"/>
</dbReference>
<dbReference type="InterPro" id="IPR013078">
    <property type="entry name" value="His_Pase_superF_clade-1"/>
</dbReference>
<dbReference type="InterPro" id="IPR029033">
    <property type="entry name" value="His_PPase_superfam"/>
</dbReference>
<dbReference type="InterPro" id="IPR001345">
    <property type="entry name" value="PG/BPGM_mutase_AS"/>
</dbReference>
<dbReference type="InterPro" id="IPR005952">
    <property type="entry name" value="Phosphogly_mut1"/>
</dbReference>
<dbReference type="NCBIfam" id="TIGR01258">
    <property type="entry name" value="pgm_1"/>
    <property type="match status" value="1"/>
</dbReference>
<dbReference type="PANTHER" id="PTHR11931">
    <property type="entry name" value="PHOSPHOGLYCERATE MUTASE"/>
    <property type="match status" value="1"/>
</dbReference>
<dbReference type="Pfam" id="PF00300">
    <property type="entry name" value="His_Phos_1"/>
    <property type="match status" value="1"/>
</dbReference>
<dbReference type="SMART" id="SM00855">
    <property type="entry name" value="PGAM"/>
    <property type="match status" value="1"/>
</dbReference>
<dbReference type="SUPFAM" id="SSF53254">
    <property type="entry name" value="Phosphoglycerate mutase-like"/>
    <property type="match status" value="1"/>
</dbReference>
<dbReference type="PROSITE" id="PS00175">
    <property type="entry name" value="PG_MUTASE"/>
    <property type="match status" value="1"/>
</dbReference>
<reference key="1">
    <citation type="journal article" date="1997" name="Microbiology">
        <title>Sequence, localization and characteristics of the replicator region of the symbiotic plasmid of Rhizobium etli.</title>
        <authorList>
            <person name="Ramirez-Romero M.A."/>
            <person name="Bustos P."/>
            <person name="Girard L."/>
            <person name="Rodriguez O."/>
            <person name="Cevallos M.A."/>
            <person name="Davila G."/>
        </authorList>
    </citation>
    <scope>NUCLEOTIDE SEQUENCE [GENOMIC DNA]</scope>
</reference>
<reference key="2">
    <citation type="submission" date="2002-06" db="EMBL/GenBank/DDBJ databases">
        <authorList>
            <person name="Quintero V."/>
            <person name="Cevallos M.A."/>
            <person name="Davila G."/>
        </authorList>
    </citation>
    <scope>SEQUENCE REVISION</scope>
</reference>
<reference key="3">
    <citation type="journal article" date="2003" name="Genome Biol.">
        <title>The mosaic structure of the symbiotic plasmid of Rhizobium etli CFN42 and its relation to other symbiotic genome compartments.</title>
        <authorList>
            <person name="Gonzalez V."/>
            <person name="Bustos P."/>
            <person name="Ramirez-Romero M.A."/>
            <person name="Medrano-Soto A."/>
            <person name="Salgado H."/>
            <person name="Hernandez-Gonzalez I."/>
            <person name="Hernandez-Celis J.C."/>
            <person name="Quintero V."/>
            <person name="Moreno-Hagelsieb G."/>
            <person name="Girard L."/>
            <person name="Rodriguez O."/>
            <person name="Flores M."/>
            <person name="Cevallos M.A."/>
            <person name="Collado-Vides J."/>
            <person name="Romero D."/>
            <person name="Davila G."/>
        </authorList>
    </citation>
    <scope>NUCLEOTIDE SEQUENCE [LARGE SCALE GENOMIC DNA]</scope>
    <source>
        <strain>ATCC 51251 / DSM 11541 / JCM 21823 / NBRC 15573 / CFN 42</strain>
    </source>
</reference>
<reference key="4">
    <citation type="journal article" date="2006" name="Proc. Natl. Acad. Sci. U.S.A.">
        <title>The partitioned Rhizobium etli genome: genetic and metabolic redundancy in seven interacting replicons.</title>
        <authorList>
            <person name="Gonzalez V."/>
            <person name="Santamaria R.I."/>
            <person name="Bustos P."/>
            <person name="Hernandez-Gonzalez I."/>
            <person name="Medrano-Soto A."/>
            <person name="Moreno-Hagelsieb G."/>
            <person name="Janga S.C."/>
            <person name="Ramirez M.A."/>
            <person name="Jimenez-Jacinto V."/>
            <person name="Collado-Vides J."/>
            <person name="Davila G."/>
        </authorList>
    </citation>
    <scope>NUCLEOTIDE SEQUENCE [LARGE SCALE GENOMIC DNA]</scope>
    <source>
        <strain>ATCC 51251 / DSM 11541 / JCM 21823 / NBRC 15573 / CFN 42</strain>
    </source>
</reference>
<gene>
    <name evidence="1" type="primary">gpmA</name>
    <name type="synonym">pgmY</name>
    <name type="ordered locus">RHE_PD00127</name>
</gene>
<keyword id="KW-0312">Gluconeogenesis</keyword>
<keyword id="KW-0324">Glycolysis</keyword>
<keyword id="KW-0413">Isomerase</keyword>
<keyword id="KW-0614">Plasmid</keyword>
<keyword id="KW-1185">Reference proteome</keyword>
<geneLocation type="plasmid">
    <name>sym p42d</name>
</geneLocation>
<feature type="chain" id="PRO_0000179904" description="2,3-bisphosphoglycerate-dependent phosphoglycerate mutase">
    <location>
        <begin position="1"/>
        <end position="209"/>
    </location>
</feature>
<feature type="active site" description="Tele-phosphohistidine intermediate" evidence="1">
    <location>
        <position position="9"/>
    </location>
</feature>
<feature type="active site" description="Proton donor/acceptor" evidence="1">
    <location>
        <position position="87"/>
    </location>
</feature>
<feature type="binding site" evidence="1">
    <location>
        <begin position="8"/>
        <end position="15"/>
    </location>
    <ligand>
        <name>substrate</name>
    </ligand>
</feature>
<feature type="binding site" evidence="1">
    <location>
        <begin position="21"/>
        <end position="22"/>
    </location>
    <ligand>
        <name>substrate</name>
    </ligand>
</feature>
<feature type="binding site" evidence="1">
    <location>
        <position position="60"/>
    </location>
    <ligand>
        <name>substrate</name>
    </ligand>
</feature>
<feature type="binding site" evidence="1">
    <location>
        <begin position="87"/>
        <end position="90"/>
    </location>
    <ligand>
        <name>substrate</name>
    </ligand>
</feature>
<feature type="binding site" evidence="1">
    <location>
        <position position="98"/>
    </location>
    <ligand>
        <name>substrate</name>
    </ligand>
</feature>
<feature type="binding site" evidence="1">
    <location>
        <begin position="114"/>
        <end position="115"/>
    </location>
    <ligand>
        <name>substrate</name>
    </ligand>
</feature>
<feature type="binding site" evidence="1">
    <location>
        <begin position="158"/>
        <end position="159"/>
    </location>
    <ligand>
        <name>substrate</name>
    </ligand>
</feature>
<feature type="site" description="Transition state stabilizer" evidence="1">
    <location>
        <position position="157"/>
    </location>
</feature>